<dbReference type="EC" id="6.3.2.4" evidence="2"/>
<dbReference type="EMBL" id="CP001185">
    <property type="protein sequence ID" value="ACJ75254.1"/>
    <property type="molecule type" value="Genomic_DNA"/>
</dbReference>
<dbReference type="RefSeq" id="WP_012579799.1">
    <property type="nucleotide sequence ID" value="NC_011653.1"/>
</dbReference>
<dbReference type="SMR" id="B7IGP0"/>
<dbReference type="STRING" id="484019.THA_792"/>
<dbReference type="KEGG" id="taf:THA_792"/>
<dbReference type="eggNOG" id="COG1181">
    <property type="taxonomic scope" value="Bacteria"/>
</dbReference>
<dbReference type="HOGENOM" id="CLU_039268_0_2_0"/>
<dbReference type="OrthoDB" id="9813261at2"/>
<dbReference type="UniPathway" id="UPA00219"/>
<dbReference type="Proteomes" id="UP000002453">
    <property type="component" value="Chromosome"/>
</dbReference>
<dbReference type="GO" id="GO:0005829">
    <property type="term" value="C:cytosol"/>
    <property type="evidence" value="ECO:0007669"/>
    <property type="project" value="TreeGrafter"/>
</dbReference>
<dbReference type="GO" id="GO:0005524">
    <property type="term" value="F:ATP binding"/>
    <property type="evidence" value="ECO:0007669"/>
    <property type="project" value="UniProtKB-KW"/>
</dbReference>
<dbReference type="GO" id="GO:0008716">
    <property type="term" value="F:D-alanine-D-alanine ligase activity"/>
    <property type="evidence" value="ECO:0007669"/>
    <property type="project" value="UniProtKB-UniRule"/>
</dbReference>
<dbReference type="GO" id="GO:0046872">
    <property type="term" value="F:metal ion binding"/>
    <property type="evidence" value="ECO:0007669"/>
    <property type="project" value="UniProtKB-KW"/>
</dbReference>
<dbReference type="GO" id="GO:0071555">
    <property type="term" value="P:cell wall organization"/>
    <property type="evidence" value="ECO:0007669"/>
    <property type="project" value="UniProtKB-KW"/>
</dbReference>
<dbReference type="GO" id="GO:0009252">
    <property type="term" value="P:peptidoglycan biosynthetic process"/>
    <property type="evidence" value="ECO:0007669"/>
    <property type="project" value="UniProtKB-UniRule"/>
</dbReference>
<dbReference type="GO" id="GO:0008360">
    <property type="term" value="P:regulation of cell shape"/>
    <property type="evidence" value="ECO:0007669"/>
    <property type="project" value="UniProtKB-KW"/>
</dbReference>
<dbReference type="FunFam" id="3.30.1490.20:FF:000007">
    <property type="entry name" value="D-alanine--D-alanine ligase"/>
    <property type="match status" value="1"/>
</dbReference>
<dbReference type="Gene3D" id="3.40.50.20">
    <property type="match status" value="1"/>
</dbReference>
<dbReference type="Gene3D" id="3.30.1490.20">
    <property type="entry name" value="ATP-grasp fold, A domain"/>
    <property type="match status" value="1"/>
</dbReference>
<dbReference type="Gene3D" id="3.30.470.20">
    <property type="entry name" value="ATP-grasp fold, B domain"/>
    <property type="match status" value="1"/>
</dbReference>
<dbReference type="HAMAP" id="MF_00047">
    <property type="entry name" value="Dala_Dala_lig"/>
    <property type="match status" value="1"/>
</dbReference>
<dbReference type="InterPro" id="IPR011761">
    <property type="entry name" value="ATP-grasp"/>
</dbReference>
<dbReference type="InterPro" id="IPR013815">
    <property type="entry name" value="ATP_grasp_subdomain_1"/>
</dbReference>
<dbReference type="InterPro" id="IPR000291">
    <property type="entry name" value="D-Ala_lig_Van_CS"/>
</dbReference>
<dbReference type="InterPro" id="IPR005905">
    <property type="entry name" value="D_ala_D_ala"/>
</dbReference>
<dbReference type="InterPro" id="IPR011095">
    <property type="entry name" value="Dala_Dala_lig_C"/>
</dbReference>
<dbReference type="InterPro" id="IPR011127">
    <property type="entry name" value="Dala_Dala_lig_N"/>
</dbReference>
<dbReference type="InterPro" id="IPR016185">
    <property type="entry name" value="PreATP-grasp_dom_sf"/>
</dbReference>
<dbReference type="NCBIfam" id="TIGR01205">
    <property type="entry name" value="D_ala_D_alaTIGR"/>
    <property type="match status" value="1"/>
</dbReference>
<dbReference type="NCBIfam" id="NF002528">
    <property type="entry name" value="PRK01966.1-4"/>
    <property type="match status" value="1"/>
</dbReference>
<dbReference type="PANTHER" id="PTHR23132">
    <property type="entry name" value="D-ALANINE--D-ALANINE LIGASE"/>
    <property type="match status" value="1"/>
</dbReference>
<dbReference type="PANTHER" id="PTHR23132:SF25">
    <property type="entry name" value="D-ALANINE--D-ALANINE LIGASE A"/>
    <property type="match status" value="1"/>
</dbReference>
<dbReference type="Pfam" id="PF07478">
    <property type="entry name" value="Dala_Dala_lig_C"/>
    <property type="match status" value="1"/>
</dbReference>
<dbReference type="Pfam" id="PF01820">
    <property type="entry name" value="Dala_Dala_lig_N"/>
    <property type="match status" value="1"/>
</dbReference>
<dbReference type="PIRSF" id="PIRSF039102">
    <property type="entry name" value="Ddl/VanB"/>
    <property type="match status" value="1"/>
</dbReference>
<dbReference type="SUPFAM" id="SSF56059">
    <property type="entry name" value="Glutathione synthetase ATP-binding domain-like"/>
    <property type="match status" value="1"/>
</dbReference>
<dbReference type="SUPFAM" id="SSF52440">
    <property type="entry name" value="PreATP-grasp domain"/>
    <property type="match status" value="1"/>
</dbReference>
<dbReference type="PROSITE" id="PS50975">
    <property type="entry name" value="ATP_GRASP"/>
    <property type="match status" value="1"/>
</dbReference>
<dbReference type="PROSITE" id="PS00843">
    <property type="entry name" value="DALA_DALA_LIGASE_1"/>
    <property type="match status" value="1"/>
</dbReference>
<dbReference type="PROSITE" id="PS00844">
    <property type="entry name" value="DALA_DALA_LIGASE_2"/>
    <property type="match status" value="1"/>
</dbReference>
<evidence type="ECO:0000250" key="1"/>
<evidence type="ECO:0000255" key="2">
    <source>
        <dbReference type="HAMAP-Rule" id="MF_00047"/>
    </source>
</evidence>
<name>DDL_THEAB</name>
<gene>
    <name evidence="2" type="primary">ddl</name>
    <name type="ordered locus">THA_792</name>
</gene>
<keyword id="KW-0067">ATP-binding</keyword>
<keyword id="KW-0133">Cell shape</keyword>
<keyword id="KW-0961">Cell wall biogenesis/degradation</keyword>
<keyword id="KW-0963">Cytoplasm</keyword>
<keyword id="KW-0436">Ligase</keyword>
<keyword id="KW-0460">Magnesium</keyword>
<keyword id="KW-0464">Manganese</keyword>
<keyword id="KW-0479">Metal-binding</keyword>
<keyword id="KW-0547">Nucleotide-binding</keyword>
<keyword id="KW-0573">Peptidoglycan synthesis</keyword>
<keyword id="KW-1185">Reference proteome</keyword>
<comment type="function">
    <text evidence="2">Cell wall formation.</text>
</comment>
<comment type="catalytic activity">
    <reaction evidence="2">
        <text>2 D-alanine + ATP = D-alanyl-D-alanine + ADP + phosphate + H(+)</text>
        <dbReference type="Rhea" id="RHEA:11224"/>
        <dbReference type="ChEBI" id="CHEBI:15378"/>
        <dbReference type="ChEBI" id="CHEBI:30616"/>
        <dbReference type="ChEBI" id="CHEBI:43474"/>
        <dbReference type="ChEBI" id="CHEBI:57416"/>
        <dbReference type="ChEBI" id="CHEBI:57822"/>
        <dbReference type="ChEBI" id="CHEBI:456216"/>
        <dbReference type="EC" id="6.3.2.4"/>
    </reaction>
</comment>
<comment type="cofactor">
    <cofactor evidence="1">
        <name>Mg(2+)</name>
        <dbReference type="ChEBI" id="CHEBI:18420"/>
    </cofactor>
    <cofactor evidence="1">
        <name>Mn(2+)</name>
        <dbReference type="ChEBI" id="CHEBI:29035"/>
    </cofactor>
    <text evidence="1">Binds 2 magnesium or manganese ions per subunit.</text>
</comment>
<comment type="pathway">
    <text evidence="2">Cell wall biogenesis; peptidoglycan biosynthesis.</text>
</comment>
<comment type="subcellular location">
    <subcellularLocation>
        <location evidence="2">Cytoplasm</location>
    </subcellularLocation>
</comment>
<comment type="similarity">
    <text evidence="2">Belongs to the D-alanine--D-alanine ligase family.</text>
</comment>
<proteinExistence type="inferred from homology"/>
<feature type="chain" id="PRO_1000189752" description="D-alanine--D-alanine ligase">
    <location>
        <begin position="1"/>
        <end position="367"/>
    </location>
</feature>
<feature type="domain" description="ATP-grasp" evidence="2">
    <location>
        <begin position="139"/>
        <end position="340"/>
    </location>
</feature>
<feature type="binding site" evidence="2">
    <location>
        <begin position="169"/>
        <end position="224"/>
    </location>
    <ligand>
        <name>ATP</name>
        <dbReference type="ChEBI" id="CHEBI:30616"/>
    </ligand>
</feature>
<feature type="binding site" evidence="2">
    <location>
        <position position="298"/>
    </location>
    <ligand>
        <name>Mg(2+)</name>
        <dbReference type="ChEBI" id="CHEBI:18420"/>
        <label>1</label>
    </ligand>
</feature>
<feature type="binding site" evidence="2">
    <location>
        <position position="311"/>
    </location>
    <ligand>
        <name>Mg(2+)</name>
        <dbReference type="ChEBI" id="CHEBI:18420"/>
        <label>1</label>
    </ligand>
</feature>
<feature type="binding site" evidence="2">
    <location>
        <position position="311"/>
    </location>
    <ligand>
        <name>Mg(2+)</name>
        <dbReference type="ChEBI" id="CHEBI:18420"/>
        <label>2</label>
    </ligand>
</feature>
<feature type="binding site" evidence="2">
    <location>
        <position position="313"/>
    </location>
    <ligand>
        <name>Mg(2+)</name>
        <dbReference type="ChEBI" id="CHEBI:18420"/>
        <label>2</label>
    </ligand>
</feature>
<organism>
    <name type="scientific">Thermosipho africanus (strain TCF52B)</name>
    <dbReference type="NCBI Taxonomy" id="484019"/>
    <lineage>
        <taxon>Bacteria</taxon>
        <taxon>Thermotogati</taxon>
        <taxon>Thermotogota</taxon>
        <taxon>Thermotogae</taxon>
        <taxon>Thermotogales</taxon>
        <taxon>Fervidobacteriaceae</taxon>
        <taxon>Thermosipho</taxon>
    </lineage>
</organism>
<sequence length="367" mass="42037">MINVGLLFGSKSVEHEISIITAHQVLSFVDKNKYNIIPIYITKDGKWLTGKILEDLENFKNLERLEKKSKQISSISAKDGKLILHSNIKKITIDVCLLTFHGSNGEDGSIQGMLEFLNVPYTGCGMYSSMYTMDKVITKLILKEKNIPVVDFLYTNKKNYTNDFLNHCKEVLEYPMIVKPARLGSSIGVKKVNDKCELEEAIETAFSFDDKVIVEKWIDSRELNCAVMGYKNIVVSEIEEIKKQKDFFDYNEKYVQKGKKFSNHIIPAPIDENLKNTIKSIARDTFNALECHGNIRIDFLLSKDNKIYVNEVNSIPGALSYYLWQMSGFTFSQVIDNMISIAFEAFKDKKSKIYSIDTNLFDLKVEK</sequence>
<accession>B7IGP0</accession>
<reference key="1">
    <citation type="journal article" date="2009" name="J. Bacteriol.">
        <title>The genome of Thermosipho africanus TCF52B: lateral genetic connections to the Firmicutes and Archaea.</title>
        <authorList>
            <person name="Nesboe C.L."/>
            <person name="Bapteste E."/>
            <person name="Curtis B."/>
            <person name="Dahle H."/>
            <person name="Lopez P."/>
            <person name="Macleod D."/>
            <person name="Dlutek M."/>
            <person name="Bowman S."/>
            <person name="Zhaxybayeva O."/>
            <person name="Birkeland N.-K."/>
            <person name="Doolittle W.F."/>
        </authorList>
    </citation>
    <scope>NUCLEOTIDE SEQUENCE [LARGE SCALE GENOMIC DNA]</scope>
    <source>
        <strain>TCF52B</strain>
    </source>
</reference>
<protein>
    <recommendedName>
        <fullName evidence="2">D-alanine--D-alanine ligase</fullName>
        <ecNumber evidence="2">6.3.2.4</ecNumber>
    </recommendedName>
    <alternativeName>
        <fullName evidence="2">D-Ala-D-Ala ligase</fullName>
    </alternativeName>
    <alternativeName>
        <fullName evidence="2">D-alanylalanine synthetase</fullName>
    </alternativeName>
</protein>